<comment type="catalytic activity">
    <reaction>
        <text>L-proline + NADP(+) = (S)-1-pyrroline-5-carboxylate + NADPH + 2 H(+)</text>
        <dbReference type="Rhea" id="RHEA:14109"/>
        <dbReference type="ChEBI" id="CHEBI:15378"/>
        <dbReference type="ChEBI" id="CHEBI:17388"/>
        <dbReference type="ChEBI" id="CHEBI:57783"/>
        <dbReference type="ChEBI" id="CHEBI:58349"/>
        <dbReference type="ChEBI" id="CHEBI:60039"/>
        <dbReference type="EC" id="1.5.1.2"/>
    </reaction>
</comment>
<comment type="catalytic activity">
    <reaction>
        <text>L-proline + NAD(+) = (S)-1-pyrroline-5-carboxylate + NADH + 2 H(+)</text>
        <dbReference type="Rhea" id="RHEA:14105"/>
        <dbReference type="ChEBI" id="CHEBI:15378"/>
        <dbReference type="ChEBI" id="CHEBI:17388"/>
        <dbReference type="ChEBI" id="CHEBI:57540"/>
        <dbReference type="ChEBI" id="CHEBI:57945"/>
        <dbReference type="ChEBI" id="CHEBI:60039"/>
        <dbReference type="EC" id="1.5.1.2"/>
    </reaction>
</comment>
<comment type="pathway">
    <text>Amino-acid biosynthesis; L-proline biosynthesis; L-proline from L-glutamate 5-semialdehyde: step 1/1.</text>
</comment>
<comment type="similarity">
    <text evidence="1">Belongs to the pyrroline-5-carboxylate reductase family.</text>
</comment>
<comment type="sequence caution" evidence="1">
    <conflict type="erroneous gene model prediction">
        <sequence resource="EMBL-CDS" id="AAA83568"/>
    </conflict>
</comment>
<comment type="sequence caution" evidence="1">
    <conflict type="frameshift">
        <sequence resource="EMBL-CDS" id="AAA83568"/>
    </conflict>
</comment>
<feature type="chain" id="PRO_0000187326" description="Pyrroline-5-carboxylate reductase">
    <location>
        <begin position="1"/>
        <end position="332"/>
    </location>
</feature>
<sequence length="332" mass="34215">MAAPQVKSSSELTMAVLGCGTMGISILSGILSSLSSIAQDPSPPPTNPPALPRHFIATVRSPSSVAKVESALSPLVKPSVSTLRVLQSTSNVSAAAEADIILLGCKPYMVSGLLSASGMKDALTVKHTEGHARSQKIIISICAGVTVPDLERVLREDVGLSADNLPIVVRAMPNTASKIRESMTVINTVDPPLPDTVTELLTWIFERIGEVVYLPPHLMDACTSLCASGTAFFALMMEAAADGGVAMGLPRAEANRMAAQTMRGAAGLVLEGEHPAILREKVSTPGGCTIGGLLVLEEGGVRAAVARAVREATVVASLLGGGGAKNVNGTRH</sequence>
<keyword id="KW-0028">Amino-acid biosynthesis</keyword>
<keyword id="KW-0521">NADP</keyword>
<keyword id="KW-0560">Oxidoreductase</keyword>
<keyword id="KW-0641">Proline biosynthesis</keyword>
<keyword id="KW-1185">Reference proteome</keyword>
<proteinExistence type="inferred from homology"/>
<dbReference type="EC" id="1.5.1.2"/>
<dbReference type="EMBL" id="U30317">
    <property type="protein sequence ID" value="AAA83568.1"/>
    <property type="status" value="ALT_SEQ"/>
    <property type="molecule type" value="Genomic_DNA"/>
</dbReference>
<dbReference type="EMBL" id="CM002238">
    <property type="protein sequence ID" value="EAA28126.2"/>
    <property type="molecule type" value="Genomic_DNA"/>
</dbReference>
<dbReference type="PIR" id="S57863">
    <property type="entry name" value="S57863"/>
</dbReference>
<dbReference type="RefSeq" id="XP_957362.2">
    <property type="nucleotide sequence ID" value="XM_952269.3"/>
</dbReference>
<dbReference type="SMR" id="Q12641"/>
<dbReference type="FunCoup" id="Q12641">
    <property type="interactions" value="423"/>
</dbReference>
<dbReference type="STRING" id="367110.Q12641"/>
<dbReference type="PaxDb" id="5141-EFNCRP00000006245"/>
<dbReference type="EnsemblFungi" id="EAA28126">
    <property type="protein sequence ID" value="EAA28126"/>
    <property type="gene ID" value="NCU06471"/>
</dbReference>
<dbReference type="GeneID" id="3873483"/>
<dbReference type="KEGG" id="ncr:NCU06471"/>
<dbReference type="VEuPathDB" id="FungiDB:NCU06471"/>
<dbReference type="HOGENOM" id="CLU_042344_1_1_1"/>
<dbReference type="InParanoid" id="Q12641"/>
<dbReference type="OMA" id="VWAVKPQ"/>
<dbReference type="OrthoDB" id="10263291at2759"/>
<dbReference type="UniPathway" id="UPA00098">
    <property type="reaction ID" value="UER00361"/>
</dbReference>
<dbReference type="Proteomes" id="UP000001805">
    <property type="component" value="Chromosome 3, Linkage Group III"/>
</dbReference>
<dbReference type="GO" id="GO:0004735">
    <property type="term" value="F:pyrroline-5-carboxylate reductase activity"/>
    <property type="evidence" value="ECO:0000318"/>
    <property type="project" value="GO_Central"/>
</dbReference>
<dbReference type="GO" id="GO:0055129">
    <property type="term" value="P:L-proline biosynthetic process"/>
    <property type="evidence" value="ECO:0000318"/>
    <property type="project" value="GO_Central"/>
</dbReference>
<dbReference type="FunFam" id="1.10.3730.10:FF:000001">
    <property type="entry name" value="Pyrroline-5-carboxylate reductase"/>
    <property type="match status" value="1"/>
</dbReference>
<dbReference type="Gene3D" id="3.40.50.720">
    <property type="entry name" value="NAD(P)-binding Rossmann-like Domain"/>
    <property type="match status" value="1"/>
</dbReference>
<dbReference type="Gene3D" id="1.10.3730.10">
    <property type="entry name" value="ProC C-terminal domain-like"/>
    <property type="match status" value="1"/>
</dbReference>
<dbReference type="HAMAP" id="MF_01925">
    <property type="entry name" value="P5C_reductase"/>
    <property type="match status" value="1"/>
</dbReference>
<dbReference type="InterPro" id="IPR008927">
    <property type="entry name" value="6-PGluconate_DH-like_C_sf"/>
</dbReference>
<dbReference type="InterPro" id="IPR036291">
    <property type="entry name" value="NAD(P)-bd_dom_sf"/>
</dbReference>
<dbReference type="InterPro" id="IPR028939">
    <property type="entry name" value="P5C_Rdtase_cat_N"/>
</dbReference>
<dbReference type="InterPro" id="IPR053790">
    <property type="entry name" value="P5CR-like_CS"/>
</dbReference>
<dbReference type="InterPro" id="IPR029036">
    <property type="entry name" value="P5CR_dimer"/>
</dbReference>
<dbReference type="InterPro" id="IPR000304">
    <property type="entry name" value="Pyrroline-COOH_reductase"/>
</dbReference>
<dbReference type="NCBIfam" id="TIGR00112">
    <property type="entry name" value="proC"/>
    <property type="match status" value="1"/>
</dbReference>
<dbReference type="PANTHER" id="PTHR11645">
    <property type="entry name" value="PYRROLINE-5-CARBOXYLATE REDUCTASE"/>
    <property type="match status" value="1"/>
</dbReference>
<dbReference type="PANTHER" id="PTHR11645:SF0">
    <property type="entry name" value="PYRROLINE-5-CARBOXYLATE REDUCTASE 3"/>
    <property type="match status" value="1"/>
</dbReference>
<dbReference type="Pfam" id="PF03807">
    <property type="entry name" value="F420_oxidored"/>
    <property type="match status" value="1"/>
</dbReference>
<dbReference type="Pfam" id="PF14748">
    <property type="entry name" value="P5CR_dimer"/>
    <property type="match status" value="1"/>
</dbReference>
<dbReference type="SUPFAM" id="SSF48179">
    <property type="entry name" value="6-phosphogluconate dehydrogenase C-terminal domain-like"/>
    <property type="match status" value="1"/>
</dbReference>
<dbReference type="SUPFAM" id="SSF51735">
    <property type="entry name" value="NAD(P)-binding Rossmann-fold domains"/>
    <property type="match status" value="1"/>
</dbReference>
<dbReference type="PROSITE" id="PS00521">
    <property type="entry name" value="P5CR"/>
    <property type="match status" value="1"/>
</dbReference>
<accession>Q12641</accession>
<accession>Q7RV72</accession>
<gene>
    <name type="primary">pro-1</name>
    <name type="ORF">NCU06471</name>
</gene>
<name>P5CR_NEUCR</name>
<evidence type="ECO:0000305" key="1"/>
<protein>
    <recommendedName>
        <fullName>Pyrroline-5-carboxylate reductase</fullName>
        <shortName>P5C reductase</shortName>
        <shortName>P5CR</shortName>
        <ecNumber>1.5.1.2</ecNumber>
    </recommendedName>
</protein>
<organism>
    <name type="scientific">Neurospora crassa (strain ATCC 24698 / 74-OR23-1A / CBS 708.71 / DSM 1257 / FGSC 987)</name>
    <dbReference type="NCBI Taxonomy" id="367110"/>
    <lineage>
        <taxon>Eukaryota</taxon>
        <taxon>Fungi</taxon>
        <taxon>Dikarya</taxon>
        <taxon>Ascomycota</taxon>
        <taxon>Pezizomycotina</taxon>
        <taxon>Sordariomycetes</taxon>
        <taxon>Sordariomycetidae</taxon>
        <taxon>Sordariales</taxon>
        <taxon>Sordariaceae</taxon>
        <taxon>Neurospora</taxon>
    </lineage>
</organism>
<reference key="1">
    <citation type="journal article" date="1995" name="Mol. Gen. Genet.">
        <title>Molecular characterization of the proline-1 (pro-1) locus of Neurospora crassa, which encodes delta 1-pyrroline-5-carboxylate reductase.</title>
        <authorList>
            <person name="Davis C.R."/>
            <person name="McPeek M.A."/>
            <person name="McClung C.R."/>
        </authorList>
    </citation>
    <scope>NUCLEOTIDE SEQUENCE [GENOMIC DNA]</scope>
</reference>
<reference key="2">
    <citation type="journal article" date="2003" name="Nature">
        <title>The genome sequence of the filamentous fungus Neurospora crassa.</title>
        <authorList>
            <person name="Galagan J.E."/>
            <person name="Calvo S.E."/>
            <person name="Borkovich K.A."/>
            <person name="Selker E.U."/>
            <person name="Read N.D."/>
            <person name="Jaffe D.B."/>
            <person name="FitzHugh W."/>
            <person name="Ma L.-J."/>
            <person name="Smirnov S."/>
            <person name="Purcell S."/>
            <person name="Rehman B."/>
            <person name="Elkins T."/>
            <person name="Engels R."/>
            <person name="Wang S."/>
            <person name="Nielsen C.B."/>
            <person name="Butler J."/>
            <person name="Endrizzi M."/>
            <person name="Qui D."/>
            <person name="Ianakiev P."/>
            <person name="Bell-Pedersen D."/>
            <person name="Nelson M.A."/>
            <person name="Werner-Washburne M."/>
            <person name="Selitrennikoff C.P."/>
            <person name="Kinsey J.A."/>
            <person name="Braun E.L."/>
            <person name="Zelter A."/>
            <person name="Schulte U."/>
            <person name="Kothe G.O."/>
            <person name="Jedd G."/>
            <person name="Mewes H.-W."/>
            <person name="Staben C."/>
            <person name="Marcotte E."/>
            <person name="Greenberg D."/>
            <person name="Roy A."/>
            <person name="Foley K."/>
            <person name="Naylor J."/>
            <person name="Stange-Thomann N."/>
            <person name="Barrett R."/>
            <person name="Gnerre S."/>
            <person name="Kamal M."/>
            <person name="Kamvysselis M."/>
            <person name="Mauceli E.W."/>
            <person name="Bielke C."/>
            <person name="Rudd S."/>
            <person name="Frishman D."/>
            <person name="Krystofova S."/>
            <person name="Rasmussen C."/>
            <person name="Metzenberg R.L."/>
            <person name="Perkins D.D."/>
            <person name="Kroken S."/>
            <person name="Cogoni C."/>
            <person name="Macino G."/>
            <person name="Catcheside D.E.A."/>
            <person name="Li W."/>
            <person name="Pratt R.J."/>
            <person name="Osmani S.A."/>
            <person name="DeSouza C.P.C."/>
            <person name="Glass N.L."/>
            <person name="Orbach M.J."/>
            <person name="Berglund J.A."/>
            <person name="Voelker R."/>
            <person name="Yarden O."/>
            <person name="Plamann M."/>
            <person name="Seiler S."/>
            <person name="Dunlap J.C."/>
            <person name="Radford A."/>
            <person name="Aramayo R."/>
            <person name="Natvig D.O."/>
            <person name="Alex L.A."/>
            <person name="Mannhaupt G."/>
            <person name="Ebbole D.J."/>
            <person name="Freitag M."/>
            <person name="Paulsen I."/>
            <person name="Sachs M.S."/>
            <person name="Lander E.S."/>
            <person name="Nusbaum C."/>
            <person name="Birren B.W."/>
        </authorList>
    </citation>
    <scope>NUCLEOTIDE SEQUENCE [LARGE SCALE GENOMIC DNA]</scope>
    <source>
        <strain>ATCC 24698 / 74-OR23-1A / CBS 708.71 / DSM 1257 / FGSC 987</strain>
    </source>
</reference>